<comment type="similarity">
    <text evidence="1">Belongs to the UPF0434 family.</text>
</comment>
<accession>Q8DAV0</accession>
<organism>
    <name type="scientific">Vibrio vulnificus (strain CMCP6)</name>
    <dbReference type="NCBI Taxonomy" id="216895"/>
    <lineage>
        <taxon>Bacteria</taxon>
        <taxon>Pseudomonadati</taxon>
        <taxon>Pseudomonadota</taxon>
        <taxon>Gammaproteobacteria</taxon>
        <taxon>Vibrionales</taxon>
        <taxon>Vibrionaceae</taxon>
        <taxon>Vibrio</taxon>
    </lineage>
</organism>
<name>Y2087_VIBVU</name>
<reference key="1">
    <citation type="submission" date="2002-12" db="EMBL/GenBank/DDBJ databases">
        <title>Complete genome sequence of Vibrio vulnificus CMCP6.</title>
        <authorList>
            <person name="Rhee J.H."/>
            <person name="Kim S.Y."/>
            <person name="Chung S.S."/>
            <person name="Kim J.J."/>
            <person name="Moon Y.H."/>
            <person name="Jeong H."/>
            <person name="Choy H.E."/>
        </authorList>
    </citation>
    <scope>NUCLEOTIDE SEQUENCE [LARGE SCALE GENOMIC DNA]</scope>
    <source>
        <strain>CMCP6</strain>
    </source>
</reference>
<evidence type="ECO:0000255" key="1">
    <source>
        <dbReference type="HAMAP-Rule" id="MF_01187"/>
    </source>
</evidence>
<protein>
    <recommendedName>
        <fullName evidence="1">UPF0434 protein VV1_2087</fullName>
    </recommendedName>
</protein>
<proteinExistence type="inferred from homology"/>
<gene>
    <name type="ordered locus">VV1_2087</name>
</gene>
<dbReference type="EMBL" id="AE016795">
    <property type="protein sequence ID" value="AAO10475.1"/>
    <property type="molecule type" value="Genomic_DNA"/>
</dbReference>
<dbReference type="RefSeq" id="WP_011079973.1">
    <property type="nucleotide sequence ID" value="NC_004459.3"/>
</dbReference>
<dbReference type="SMR" id="Q8DAV0"/>
<dbReference type="KEGG" id="vvu:VV1_2087"/>
<dbReference type="HOGENOM" id="CLU_155659_3_1_6"/>
<dbReference type="Proteomes" id="UP000002275">
    <property type="component" value="Chromosome 1"/>
</dbReference>
<dbReference type="GO" id="GO:0005829">
    <property type="term" value="C:cytosol"/>
    <property type="evidence" value="ECO:0007669"/>
    <property type="project" value="TreeGrafter"/>
</dbReference>
<dbReference type="FunFam" id="2.20.25.10:FF:000002">
    <property type="entry name" value="UPF0434 protein YcaR"/>
    <property type="match status" value="1"/>
</dbReference>
<dbReference type="Gene3D" id="2.20.25.10">
    <property type="match status" value="1"/>
</dbReference>
<dbReference type="HAMAP" id="MF_01187">
    <property type="entry name" value="UPF0434"/>
    <property type="match status" value="1"/>
</dbReference>
<dbReference type="InterPro" id="IPR005651">
    <property type="entry name" value="Trm112-like"/>
</dbReference>
<dbReference type="PANTHER" id="PTHR33505:SF4">
    <property type="entry name" value="PROTEIN PREY, MITOCHONDRIAL"/>
    <property type="match status" value="1"/>
</dbReference>
<dbReference type="PANTHER" id="PTHR33505">
    <property type="entry name" value="ZGC:162634"/>
    <property type="match status" value="1"/>
</dbReference>
<dbReference type="Pfam" id="PF03966">
    <property type="entry name" value="Trm112p"/>
    <property type="match status" value="1"/>
</dbReference>
<dbReference type="SUPFAM" id="SSF158997">
    <property type="entry name" value="Trm112p-like"/>
    <property type="match status" value="1"/>
</dbReference>
<feature type="chain" id="PRO_0000291182" description="UPF0434 protein VV1_2087">
    <location>
        <begin position="1"/>
        <end position="59"/>
    </location>
</feature>
<sequence length="59" mass="6714">MDHRLLEIVACPVCKGKLTFDKENQELICKLDRLAYPIKEGIPVLLEPEARSMGMDEGR</sequence>